<reference key="1">
    <citation type="journal article" date="2006" name="BMC Immunol.">
        <title>Profiling helper T cell subset gene expression in deer mice.</title>
        <authorList>
            <person name="Oko L."/>
            <person name="Aduddell-Swope B."/>
            <person name="Willis D."/>
            <person name="Hamor R."/>
            <person name="Coons T.A."/>
            <person name="Hjelle B."/>
            <person name="Schountz T."/>
        </authorList>
    </citation>
    <scope>NUCLEOTIDE SEQUENCE [MRNA]</scope>
</reference>
<keyword id="KW-0051">Antiviral defense</keyword>
<keyword id="KW-0202">Cytokine</keyword>
<keyword id="KW-0325">Glycoprotein</keyword>
<keyword id="KW-0341">Growth regulation</keyword>
<keyword id="KW-0873">Pyrrolidone carboxylic acid</keyword>
<keyword id="KW-0964">Secreted</keyword>
<keyword id="KW-0732">Signal</keyword>
<comment type="function">
    <text evidence="2 3">Type II interferon produced by immune cells such as T-cells and NK cells that plays crucial roles in antimicrobial, antiviral, and antitumor responses by activating effector immune cells and enhancing antigen presentation. Primarily signals through the JAK-STAT pathway after interaction with its receptor IFNGR1 to affect gene regulation. Upon IFNG binding, IFNGR1 intracellular domain opens out to allow association of downstream signaling components JAK2, JAK1 and STAT1, leading to STAT1 activation, nuclear translocation and transcription of IFNG-regulated genes. Many of the induced genes are transcription factors such as IRF1 that are able to further drive regulation of a next wave of transcription. Plays a role in class I antigen presentation pathway by inducing a replacement of catalytic proteasome subunits with immunoproteasome subunits. In turn, increases the quantity, quality, and repertoire of peptides for class I MHC loading. Increases the efficiency of peptide generation also by inducing the expression of activator PA28 that associates with the proteasome and alters its proteolytic cleavage preference. Up-regulates as well MHC II complexes on the cell surface by promoting expression of several key molecules such as cathepsins B/CTSB, H/CTSH, and L/CTSL (By similarity). Participates in the regulation of hematopoietic stem cells during development and under homeostatic conditions by affecting their development, quiescence, and differentiation (By similarity).</text>
</comment>
<comment type="subunit">
    <text evidence="2">Homodimer. Interacts with IFNGR1 (via extracellular domain); this interaction promotes IFNGR1 dimerization.</text>
</comment>
<comment type="subcellular location">
    <subcellularLocation>
        <location evidence="2">Secreted</location>
    </subcellularLocation>
</comment>
<comment type="tissue specificity">
    <text>Released primarily from activated T lymphocytes.</text>
</comment>
<comment type="similarity">
    <text evidence="5">Belongs to the type II (or gamma) interferon family.</text>
</comment>
<gene>
    <name type="primary">IFNG</name>
</gene>
<organism>
    <name type="scientific">Peromyscus maniculatus</name>
    <name type="common">North American deer mouse</name>
    <dbReference type="NCBI Taxonomy" id="10042"/>
    <lineage>
        <taxon>Eukaryota</taxon>
        <taxon>Metazoa</taxon>
        <taxon>Chordata</taxon>
        <taxon>Craniata</taxon>
        <taxon>Vertebrata</taxon>
        <taxon>Euteleostomi</taxon>
        <taxon>Mammalia</taxon>
        <taxon>Eutheria</taxon>
        <taxon>Euarchontoglires</taxon>
        <taxon>Glires</taxon>
        <taxon>Rodentia</taxon>
        <taxon>Myomorpha</taxon>
        <taxon>Muroidea</taxon>
        <taxon>Cricetidae</taxon>
        <taxon>Neotominae</taxon>
        <taxon>Peromyscus</taxon>
    </lineage>
</organism>
<dbReference type="EMBL" id="AY289494">
    <property type="protein sequence ID" value="AAP44086.1"/>
    <property type="molecule type" value="mRNA"/>
</dbReference>
<dbReference type="SMR" id="Q7TSP4"/>
<dbReference type="GlyCosmos" id="Q7TSP4">
    <property type="glycosylation" value="2 sites, No reported glycans"/>
</dbReference>
<dbReference type="GO" id="GO:0005615">
    <property type="term" value="C:extracellular space"/>
    <property type="evidence" value="ECO:0007669"/>
    <property type="project" value="UniProtKB-KW"/>
</dbReference>
<dbReference type="GO" id="GO:0005125">
    <property type="term" value="F:cytokine activity"/>
    <property type="evidence" value="ECO:0007669"/>
    <property type="project" value="UniProtKB-KW"/>
</dbReference>
<dbReference type="GO" id="GO:0005133">
    <property type="term" value="F:type II interferon receptor binding"/>
    <property type="evidence" value="ECO:0007669"/>
    <property type="project" value="InterPro"/>
</dbReference>
<dbReference type="GO" id="GO:0002250">
    <property type="term" value="P:adaptive immune response"/>
    <property type="evidence" value="ECO:0007669"/>
    <property type="project" value="TreeGrafter"/>
</dbReference>
<dbReference type="GO" id="GO:0051607">
    <property type="term" value="P:defense response to virus"/>
    <property type="evidence" value="ECO:0007669"/>
    <property type="project" value="UniProtKB-KW"/>
</dbReference>
<dbReference type="GO" id="GO:0006959">
    <property type="term" value="P:humoral immune response"/>
    <property type="evidence" value="ECO:0007669"/>
    <property type="project" value="TreeGrafter"/>
</dbReference>
<dbReference type="FunFam" id="1.20.1250.10:FF:000007">
    <property type="entry name" value="Interferon gamma"/>
    <property type="match status" value="1"/>
</dbReference>
<dbReference type="Gene3D" id="1.20.1250.10">
    <property type="match status" value="1"/>
</dbReference>
<dbReference type="InterPro" id="IPR009079">
    <property type="entry name" value="4_helix_cytokine-like_core"/>
</dbReference>
<dbReference type="InterPro" id="IPR002069">
    <property type="entry name" value="Interferon_gamma"/>
</dbReference>
<dbReference type="PANTHER" id="PTHR11419">
    <property type="entry name" value="INTERFERON GAMMA"/>
    <property type="match status" value="1"/>
</dbReference>
<dbReference type="PANTHER" id="PTHR11419:SF0">
    <property type="entry name" value="INTERFERON GAMMA"/>
    <property type="match status" value="1"/>
</dbReference>
<dbReference type="Pfam" id="PF00714">
    <property type="entry name" value="IFN-gamma"/>
    <property type="match status" value="1"/>
</dbReference>
<dbReference type="PIRSF" id="PIRSF001936">
    <property type="entry name" value="IFN-gamma"/>
    <property type="match status" value="1"/>
</dbReference>
<dbReference type="SUPFAM" id="SSF47266">
    <property type="entry name" value="4-helical cytokines"/>
    <property type="match status" value="1"/>
</dbReference>
<feature type="signal peptide" evidence="1">
    <location>
        <begin position="1"/>
        <end position="23"/>
    </location>
</feature>
<feature type="chain" id="PRO_0000253750" description="Interferon gamma">
    <location>
        <begin position="24"/>
        <end position="175"/>
    </location>
</feature>
<feature type="modified residue" description="Pyrrolidone carboxylic acid" evidence="2">
    <location>
        <position position="24"/>
    </location>
</feature>
<feature type="glycosylation site" description="N-linked (GlcNAc...) asparagine" evidence="4">
    <location>
        <position position="39"/>
    </location>
</feature>
<feature type="glycosylation site" description="N-linked (GlcNAc...) asparagine" evidence="4">
    <location>
        <position position="106"/>
    </location>
</feature>
<proteinExistence type="evidence at transcript level"/>
<evidence type="ECO:0000250" key="1"/>
<evidence type="ECO:0000250" key="2">
    <source>
        <dbReference type="UniProtKB" id="P01579"/>
    </source>
</evidence>
<evidence type="ECO:0000250" key="3">
    <source>
        <dbReference type="UniProtKB" id="P01580"/>
    </source>
</evidence>
<evidence type="ECO:0000255" key="4"/>
<evidence type="ECO:0000305" key="5"/>
<name>IFNG_PERMA</name>
<protein>
    <recommendedName>
        <fullName>Interferon gamma</fullName>
        <shortName>IFN-gamma</shortName>
    </recommendedName>
</protein>
<accession>Q7TSP4</accession>
<sequence>MNATCCILALLLCLTQAISGCYCQGTLIEEIENLKKHFNSSSSDVGDGGELVLDIWRNWQKDGDIKIIESQIISFYFKLFDALKDNQAIQESIGTIEQDLLVHFFNSSEEKRDDFMKVMKIPVDDPQVQRKAVNELLGVMYRLSPKNSLRKRKRSRCCFGGGARPNKNNAASKTI</sequence>